<gene>
    <name evidence="5" type="primary">SOFL6</name>
    <name evidence="8" type="ordered locus">At1g58460</name>
    <name evidence="9" type="ORF">F9K23.1</name>
</gene>
<sequence length="177" mass="20428">MDFSDLDYSDAGDSGWTMYLGHSSSVSLHHFDYHNGETKQEHDEDSSMVSDASSGPPYYCEETVHEDHLQQNTQYWCKSKSKNKNKNKKKVHEEQGYSERFNSSFDDTASSLPVGEEVSAHKQHQNQYQRFHDFCQSYSTRRICKEKVNSGFLQQAFPVDKLALDNQGGDNQRKRRG</sequence>
<reference key="1">
    <citation type="journal article" date="2011" name="Plant Physiol.">
        <title>Genome-wide comparison of nucleotide-binding site-leucine-rich repeat-encoding genes in Arabidopsis.</title>
        <authorList>
            <person name="Guo Y.-L."/>
            <person name="Fitz J."/>
            <person name="Schneeberger K."/>
            <person name="Ossowski S."/>
            <person name="Cao J."/>
            <person name="Weigel D."/>
        </authorList>
    </citation>
    <scope>NUCLEOTIDE SEQUENCE [GENOMIC DNA]</scope>
    <source>
        <strain>cv. Cvi-0</strain>
    </source>
</reference>
<reference key="2">
    <citation type="journal article" date="2000" name="Nature">
        <title>Sequence and analysis of chromosome 1 of the plant Arabidopsis thaliana.</title>
        <authorList>
            <person name="Theologis A."/>
            <person name="Ecker J.R."/>
            <person name="Palm C.J."/>
            <person name="Federspiel N.A."/>
            <person name="Kaul S."/>
            <person name="White O."/>
            <person name="Alonso J."/>
            <person name="Altafi H."/>
            <person name="Araujo R."/>
            <person name="Bowman C.L."/>
            <person name="Brooks S.Y."/>
            <person name="Buehler E."/>
            <person name="Chan A."/>
            <person name="Chao Q."/>
            <person name="Chen H."/>
            <person name="Cheuk R.F."/>
            <person name="Chin C.W."/>
            <person name="Chung M.K."/>
            <person name="Conn L."/>
            <person name="Conway A.B."/>
            <person name="Conway A.R."/>
            <person name="Creasy T.H."/>
            <person name="Dewar K."/>
            <person name="Dunn P."/>
            <person name="Etgu P."/>
            <person name="Feldblyum T.V."/>
            <person name="Feng J.-D."/>
            <person name="Fong B."/>
            <person name="Fujii C.Y."/>
            <person name="Gill J.E."/>
            <person name="Goldsmith A.D."/>
            <person name="Haas B."/>
            <person name="Hansen N.F."/>
            <person name="Hughes B."/>
            <person name="Huizar L."/>
            <person name="Hunter J.L."/>
            <person name="Jenkins J."/>
            <person name="Johnson-Hopson C."/>
            <person name="Khan S."/>
            <person name="Khaykin E."/>
            <person name="Kim C.J."/>
            <person name="Koo H.L."/>
            <person name="Kremenetskaia I."/>
            <person name="Kurtz D.B."/>
            <person name="Kwan A."/>
            <person name="Lam B."/>
            <person name="Langin-Hooper S."/>
            <person name="Lee A."/>
            <person name="Lee J.M."/>
            <person name="Lenz C.A."/>
            <person name="Li J.H."/>
            <person name="Li Y.-P."/>
            <person name="Lin X."/>
            <person name="Liu S.X."/>
            <person name="Liu Z.A."/>
            <person name="Luros J.S."/>
            <person name="Maiti R."/>
            <person name="Marziali A."/>
            <person name="Militscher J."/>
            <person name="Miranda M."/>
            <person name="Nguyen M."/>
            <person name="Nierman W.C."/>
            <person name="Osborne B.I."/>
            <person name="Pai G."/>
            <person name="Peterson J."/>
            <person name="Pham P.K."/>
            <person name="Rizzo M."/>
            <person name="Rooney T."/>
            <person name="Rowley D."/>
            <person name="Sakano H."/>
            <person name="Salzberg S.L."/>
            <person name="Schwartz J.R."/>
            <person name="Shinn P."/>
            <person name="Southwick A.M."/>
            <person name="Sun H."/>
            <person name="Tallon L.J."/>
            <person name="Tambunga G."/>
            <person name="Toriumi M.J."/>
            <person name="Town C.D."/>
            <person name="Utterback T."/>
            <person name="Van Aken S."/>
            <person name="Vaysberg M."/>
            <person name="Vysotskaia V.S."/>
            <person name="Walker M."/>
            <person name="Wu D."/>
            <person name="Yu G."/>
            <person name="Fraser C.M."/>
            <person name="Venter J.C."/>
            <person name="Davis R.W."/>
        </authorList>
    </citation>
    <scope>NUCLEOTIDE SEQUENCE [LARGE SCALE GENOMIC DNA]</scope>
    <source>
        <strain>cv. Columbia</strain>
    </source>
</reference>
<reference key="3">
    <citation type="journal article" date="2017" name="Plant J.">
        <title>Araport11: a complete reannotation of the Arabidopsis thaliana reference genome.</title>
        <authorList>
            <person name="Cheng C.Y."/>
            <person name="Krishnakumar V."/>
            <person name="Chan A.P."/>
            <person name="Thibaud-Nissen F."/>
            <person name="Schobel S."/>
            <person name="Town C.D."/>
        </authorList>
    </citation>
    <scope>GENOME REANNOTATION</scope>
    <source>
        <strain>cv. Columbia</strain>
    </source>
</reference>
<reference key="4">
    <citation type="submission" date="2008-10" db="EMBL/GenBank/DDBJ databases">
        <title>Arabidopsis ORF clones.</title>
        <authorList>
            <person name="de los Reyes C."/>
            <person name="Quan R."/>
            <person name="Chen H."/>
            <person name="Bautista V."/>
            <person name="Kim C.J."/>
            <person name="Ecker J.R."/>
        </authorList>
    </citation>
    <scope>NUCLEOTIDE SEQUENCE [LARGE SCALE MRNA]</scope>
    <source>
        <strain>cv. Columbia</strain>
    </source>
</reference>
<reference key="5">
    <citation type="journal article" date="2018" name="G3 (Bethesda)">
        <title>Synopsis of the SOFL plant-specific gene family.</title>
        <authorList>
            <person name="Tayengwa R."/>
            <person name="Zhao J."/>
            <person name="Pierce C.F."/>
            <person name="Werner B.E."/>
            <person name="Neff M.M."/>
        </authorList>
    </citation>
    <scope>TISSUE SPECIFICITY</scope>
    <scope>GENE FAMILY</scope>
    <scope>NOMENCLATURE</scope>
    <source>
        <strain>cv. Columbia</strain>
    </source>
</reference>
<organism>
    <name type="scientific">Arabidopsis thaliana</name>
    <name type="common">Mouse-ear cress</name>
    <dbReference type="NCBI Taxonomy" id="3702"/>
    <lineage>
        <taxon>Eukaryota</taxon>
        <taxon>Viridiplantae</taxon>
        <taxon>Streptophyta</taxon>
        <taxon>Embryophyta</taxon>
        <taxon>Tracheophyta</taxon>
        <taxon>Spermatophyta</taxon>
        <taxon>Magnoliopsida</taxon>
        <taxon>eudicotyledons</taxon>
        <taxon>Gunneridae</taxon>
        <taxon>Pentapetalae</taxon>
        <taxon>rosids</taxon>
        <taxon>malvids</taxon>
        <taxon>Brassicales</taxon>
        <taxon>Brassicaceae</taxon>
        <taxon>Camelineae</taxon>
        <taxon>Arabidopsis</taxon>
    </lineage>
</organism>
<dbReference type="EMBL" id="JN389445">
    <property type="protein sequence ID" value="AEM36347.1"/>
    <property type="molecule type" value="Genomic_DNA"/>
</dbReference>
<dbReference type="EMBL" id="AC082643">
    <property type="protein sequence ID" value="AAG50642.1"/>
    <property type="status" value="ALT_SEQ"/>
    <property type="molecule type" value="Genomic_DNA"/>
</dbReference>
<dbReference type="EMBL" id="CP002684">
    <property type="protein sequence ID" value="AEE33551.1"/>
    <property type="molecule type" value="Genomic_DNA"/>
</dbReference>
<dbReference type="EMBL" id="BT050417">
    <property type="protein sequence ID" value="ACI88742.1"/>
    <property type="molecule type" value="mRNA"/>
</dbReference>
<dbReference type="PIR" id="E96618">
    <property type="entry name" value="E96618"/>
</dbReference>
<dbReference type="RefSeq" id="NP_176142.4">
    <property type="nucleotide sequence ID" value="NM_104626.5"/>
</dbReference>
<dbReference type="PaxDb" id="3702-AT1G58460.1"/>
<dbReference type="EnsemblPlants" id="AT1G58460.1">
    <property type="protein sequence ID" value="AT1G58460.1"/>
    <property type="gene ID" value="AT1G58460"/>
</dbReference>
<dbReference type="GeneID" id="842215"/>
<dbReference type="Gramene" id="AT1G58460.1">
    <property type="protein sequence ID" value="AT1G58460.1"/>
    <property type="gene ID" value="AT1G58460"/>
</dbReference>
<dbReference type="KEGG" id="ath:AT1G58460"/>
<dbReference type="Araport" id="AT1G58460"/>
<dbReference type="TAIR" id="AT1G58460"/>
<dbReference type="eggNOG" id="ENOG502R1SN">
    <property type="taxonomic scope" value="Eukaryota"/>
</dbReference>
<dbReference type="HOGENOM" id="CLU_1818514_0_0_1"/>
<dbReference type="InParanoid" id="B6IDH8"/>
<dbReference type="OMA" id="IERFNSC"/>
<dbReference type="PhylomeDB" id="B6IDH8"/>
<dbReference type="PRO" id="PR:B6IDH8"/>
<dbReference type="Proteomes" id="UP000006548">
    <property type="component" value="Chromosome 1"/>
</dbReference>
<dbReference type="ExpressionAtlas" id="B6IDH8">
    <property type="expression patterns" value="baseline and differential"/>
</dbReference>
<dbReference type="GO" id="GO:0005737">
    <property type="term" value="C:cytoplasm"/>
    <property type="evidence" value="ECO:0000250"/>
    <property type="project" value="UniProtKB"/>
</dbReference>
<dbReference type="GO" id="GO:0005634">
    <property type="term" value="C:nucleus"/>
    <property type="evidence" value="ECO:0000250"/>
    <property type="project" value="UniProtKB"/>
</dbReference>
<dbReference type="GO" id="GO:0009691">
    <property type="term" value="P:cytokinin biosynthetic process"/>
    <property type="evidence" value="ECO:0007669"/>
    <property type="project" value="UniProtKB-KW"/>
</dbReference>
<dbReference type="GO" id="GO:0009690">
    <property type="term" value="P:cytokinin metabolic process"/>
    <property type="evidence" value="ECO:0000250"/>
    <property type="project" value="UniProtKB"/>
</dbReference>
<dbReference type="GO" id="GO:0009736">
    <property type="term" value="P:cytokinin-activated signaling pathway"/>
    <property type="evidence" value="ECO:0000250"/>
    <property type="project" value="UniProtKB"/>
</dbReference>
<dbReference type="InterPro" id="IPR044670">
    <property type="entry name" value="SOFL"/>
</dbReference>
<dbReference type="PANTHER" id="PTHR33347">
    <property type="entry name" value="OSJNBA0091C07.3 PROTEIN"/>
    <property type="match status" value="1"/>
</dbReference>
<dbReference type="PANTHER" id="PTHR33347:SF34">
    <property type="entry name" value="PROTEIN SOB FIVE-LIKE 6"/>
    <property type="match status" value="1"/>
</dbReference>
<comment type="function">
    <text evidence="1">Involved in cytokinin-mediated development.</text>
</comment>
<comment type="subcellular location">
    <subcellularLocation>
        <location evidence="1">Cytoplasm</location>
    </subcellularLocation>
    <subcellularLocation>
        <location evidence="1">Nucleus</location>
    </subcellularLocation>
</comment>
<comment type="tissue specificity">
    <text evidence="4">Expressed in seedlings, flowers and siliques (PubMed:29467189). Barely detectable in roots and leaves (PubMed:29467189).</text>
</comment>
<comment type="domain">
    <text evidence="2">Domains SOFL-A and SOFL-B are required for function in cytokinin-mediated development.</text>
</comment>
<comment type="similarity">
    <text evidence="6">Belongs to the SOFL plant protein family.</text>
</comment>
<comment type="sequence caution" evidence="6">
    <conflict type="erroneous gene model prediction">
        <sequence resource="EMBL-CDS" id="AAG50642"/>
    </conflict>
</comment>
<evidence type="ECO:0000250" key="1">
    <source>
        <dbReference type="UniProtKB" id="Q67YG7"/>
    </source>
</evidence>
<evidence type="ECO:0000250" key="2">
    <source>
        <dbReference type="UniProtKB" id="Q9CA45"/>
    </source>
</evidence>
<evidence type="ECO:0000256" key="3">
    <source>
        <dbReference type="SAM" id="MobiDB-lite"/>
    </source>
</evidence>
<evidence type="ECO:0000269" key="4">
    <source>
    </source>
</evidence>
<evidence type="ECO:0000303" key="5">
    <source>
    </source>
</evidence>
<evidence type="ECO:0000305" key="6"/>
<evidence type="ECO:0000305" key="7">
    <source>
    </source>
</evidence>
<evidence type="ECO:0000312" key="8">
    <source>
        <dbReference type="Araport" id="AT1G58460"/>
    </source>
</evidence>
<evidence type="ECO:0000312" key="9">
    <source>
        <dbReference type="EMBL" id="AAG50642.1"/>
    </source>
</evidence>
<feature type="chain" id="PRO_0000450254" description="Protein SOB FIVE-LIKE 6">
    <location>
        <begin position="1"/>
        <end position="177"/>
    </location>
</feature>
<feature type="region of interest" description="Disordered" evidence="3">
    <location>
        <begin position="37"/>
        <end position="60"/>
    </location>
</feature>
<feature type="region of interest" description="Disordered" evidence="3">
    <location>
        <begin position="78"/>
        <end position="104"/>
    </location>
</feature>
<feature type="short sequence motif" description="SOFL-A" evidence="7">
    <location>
        <begin position="14"/>
        <end position="19"/>
    </location>
</feature>
<feature type="short sequence motif" description="SOFL-B" evidence="7">
    <location>
        <begin position="47"/>
        <end position="56"/>
    </location>
</feature>
<feature type="compositionally biased region" description="Basic residues" evidence="3">
    <location>
        <begin position="79"/>
        <end position="90"/>
    </location>
</feature>
<feature type="sequence conflict" description="In Ref. 1; AEM36347." evidence="6" ref="1">
    <original>G</original>
    <variation>D</variation>
    <location>
        <position position="21"/>
    </location>
</feature>
<feature type="sequence conflict" description="In Ref. 1; AEM36347." evidence="6" ref="1">
    <original>HLQQN</original>
    <variation>LLQQS</variation>
    <location>
        <begin position="68"/>
        <end position="72"/>
    </location>
</feature>
<feature type="sequence conflict" description="In Ref. 1; AEM36347." evidence="6" ref="1">
    <original>S</original>
    <variation>N</variation>
    <location>
        <position position="81"/>
    </location>
</feature>
<feature type="sequence conflict" description="In Ref. 1; AEM36347." evidence="6" ref="1">
    <original>H</original>
    <variation>HQN</variation>
    <location>
        <position position="124"/>
    </location>
</feature>
<feature type="sequence conflict" description="In Ref. 1; AEM36347." evidence="6" ref="1">
    <original>HDFC</original>
    <variation>DDFS</variation>
    <location>
        <begin position="132"/>
        <end position="135"/>
    </location>
</feature>
<name>SOFL6_ARATH</name>
<accession>B6IDH8</accession>
<accession>G1JSH9</accession>
<accession>Q9C651</accession>
<keyword id="KW-0203">Cytokinin biosynthesis</keyword>
<keyword id="KW-0932">Cytokinin signaling pathway</keyword>
<keyword id="KW-0963">Cytoplasm</keyword>
<keyword id="KW-0539">Nucleus</keyword>
<keyword id="KW-1185">Reference proteome</keyword>
<proteinExistence type="evidence at transcript level"/>
<protein>
    <recommendedName>
        <fullName evidence="5">Protein SOB FIVE-LIKE 6</fullName>
        <shortName evidence="5">AtSOFL6</shortName>
    </recommendedName>
</protein>